<accession>B6HZ30</accession>
<name>APAH_ECOSE</name>
<protein>
    <recommendedName>
        <fullName evidence="1">Bis(5'-nucleosyl)-tetraphosphatase, symmetrical</fullName>
        <ecNumber evidence="1">3.6.1.41</ecNumber>
    </recommendedName>
    <alternativeName>
        <fullName evidence="1">Ap4A hydrolase</fullName>
    </alternativeName>
    <alternativeName>
        <fullName evidence="1">Diadenosine 5',5'''-P1,P4-tetraphosphate pyrophosphohydrolase</fullName>
    </alternativeName>
    <alternativeName>
        <fullName evidence="1">Diadenosine tetraphosphatase</fullName>
    </alternativeName>
</protein>
<proteinExistence type="inferred from homology"/>
<organism>
    <name type="scientific">Escherichia coli (strain SE11)</name>
    <dbReference type="NCBI Taxonomy" id="409438"/>
    <lineage>
        <taxon>Bacteria</taxon>
        <taxon>Pseudomonadati</taxon>
        <taxon>Pseudomonadota</taxon>
        <taxon>Gammaproteobacteria</taxon>
        <taxon>Enterobacterales</taxon>
        <taxon>Enterobacteriaceae</taxon>
        <taxon>Escherichia</taxon>
    </lineage>
</organism>
<evidence type="ECO:0000255" key="1">
    <source>
        <dbReference type="HAMAP-Rule" id="MF_00199"/>
    </source>
</evidence>
<dbReference type="EC" id="3.6.1.41" evidence="1"/>
<dbReference type="EMBL" id="AP009240">
    <property type="protein sequence ID" value="BAG75574.1"/>
    <property type="molecule type" value="Genomic_DNA"/>
</dbReference>
<dbReference type="RefSeq" id="WP_000257186.1">
    <property type="nucleotide sequence ID" value="NC_011415.1"/>
</dbReference>
<dbReference type="SMR" id="B6HZ30"/>
<dbReference type="KEGG" id="ecy:ECSE_0050"/>
<dbReference type="HOGENOM" id="CLU_056184_2_0_6"/>
<dbReference type="Proteomes" id="UP000008199">
    <property type="component" value="Chromosome"/>
</dbReference>
<dbReference type="GO" id="GO:0008803">
    <property type="term" value="F:bis(5'-nucleosyl)-tetraphosphatase (symmetrical) activity"/>
    <property type="evidence" value="ECO:0007669"/>
    <property type="project" value="UniProtKB-UniRule"/>
</dbReference>
<dbReference type="CDD" id="cd07422">
    <property type="entry name" value="MPP_ApaH"/>
    <property type="match status" value="1"/>
</dbReference>
<dbReference type="FunFam" id="3.60.21.10:FF:000013">
    <property type="entry name" value="Bis(5'-nucleosyl)-tetraphosphatase, symmetrical"/>
    <property type="match status" value="1"/>
</dbReference>
<dbReference type="Gene3D" id="3.60.21.10">
    <property type="match status" value="1"/>
</dbReference>
<dbReference type="HAMAP" id="MF_00199">
    <property type="entry name" value="ApaH"/>
    <property type="match status" value="1"/>
</dbReference>
<dbReference type="InterPro" id="IPR004617">
    <property type="entry name" value="ApaH"/>
</dbReference>
<dbReference type="InterPro" id="IPR004843">
    <property type="entry name" value="Calcineurin-like_PHP_ApaH"/>
</dbReference>
<dbReference type="InterPro" id="IPR029052">
    <property type="entry name" value="Metallo-depent_PP-like"/>
</dbReference>
<dbReference type="NCBIfam" id="TIGR00668">
    <property type="entry name" value="apaH"/>
    <property type="match status" value="1"/>
</dbReference>
<dbReference type="NCBIfam" id="NF001204">
    <property type="entry name" value="PRK00166.1"/>
    <property type="match status" value="1"/>
</dbReference>
<dbReference type="PANTHER" id="PTHR40942">
    <property type="match status" value="1"/>
</dbReference>
<dbReference type="PANTHER" id="PTHR40942:SF4">
    <property type="entry name" value="CYTOCHROME C5"/>
    <property type="match status" value="1"/>
</dbReference>
<dbReference type="Pfam" id="PF00149">
    <property type="entry name" value="Metallophos"/>
    <property type="match status" value="1"/>
</dbReference>
<dbReference type="PIRSF" id="PIRSF000903">
    <property type="entry name" value="B5n-ttraPtase_sm"/>
    <property type="match status" value="1"/>
</dbReference>
<dbReference type="SUPFAM" id="SSF56300">
    <property type="entry name" value="Metallo-dependent phosphatases"/>
    <property type="match status" value="1"/>
</dbReference>
<sequence length="280" mass="31283">MATYLIGDVHGCYDELIALLHKVEFTPGKDTLWLTGDLVARGPGSLDVLRYVKSLGDSVRLVLGNHDLHLLAVFAGISRNKPKDRLTPLLEAPDADELLNWLRRQPLLQIDEEKKLVMAHAGITPQWDLQTAKECARDVEAVLSSDSYPFFLDAMYGDMPNNWSPELRGLGRLRFITNAFTRMRFCFPNGQLDMYSKESPEEAPAPLKPWFAIPGPVAEEYSIAFGHWASLEGKGTPEGIYALDTGCCWGGSLTCLRWEDKQYFVQPSNRHKDLGEAAAS</sequence>
<feature type="chain" id="PRO_1000099324" description="Bis(5'-nucleosyl)-tetraphosphatase, symmetrical">
    <location>
        <begin position="1"/>
        <end position="280"/>
    </location>
</feature>
<comment type="function">
    <text evidence="1">Hydrolyzes diadenosine 5',5'''-P1,P4-tetraphosphate to yield ADP.</text>
</comment>
<comment type="catalytic activity">
    <reaction evidence="1">
        <text>P(1),P(4)-bis(5'-adenosyl) tetraphosphate + H2O = 2 ADP + 2 H(+)</text>
        <dbReference type="Rhea" id="RHEA:24252"/>
        <dbReference type="ChEBI" id="CHEBI:15377"/>
        <dbReference type="ChEBI" id="CHEBI:15378"/>
        <dbReference type="ChEBI" id="CHEBI:58141"/>
        <dbReference type="ChEBI" id="CHEBI:456216"/>
        <dbReference type="EC" id="3.6.1.41"/>
    </reaction>
</comment>
<comment type="similarity">
    <text evidence="1">Belongs to the Ap4A hydrolase family.</text>
</comment>
<reference key="1">
    <citation type="journal article" date="2008" name="DNA Res.">
        <title>Complete genome sequence and comparative analysis of the wild-type commensal Escherichia coli strain SE11 isolated from a healthy adult.</title>
        <authorList>
            <person name="Oshima K."/>
            <person name="Toh H."/>
            <person name="Ogura Y."/>
            <person name="Sasamoto H."/>
            <person name="Morita H."/>
            <person name="Park S.-H."/>
            <person name="Ooka T."/>
            <person name="Iyoda S."/>
            <person name="Taylor T.D."/>
            <person name="Hayashi T."/>
            <person name="Itoh K."/>
            <person name="Hattori M."/>
        </authorList>
    </citation>
    <scope>NUCLEOTIDE SEQUENCE [LARGE SCALE GENOMIC DNA]</scope>
    <source>
        <strain>SE11</strain>
    </source>
</reference>
<keyword id="KW-0378">Hydrolase</keyword>
<gene>
    <name evidence="1" type="primary">apaH</name>
    <name type="ordered locus">ECSE_0050</name>
</gene>